<sequence length="352" mass="38252">MVFRIASSPYTHNQRQTSRIMLLVLIAALPGIAAQTWFFGWGTLFQIVLAAITALVAEAIVLRLRKQSVASHLQDYSALLTGLLLAVSIPPLAPWWMVVLGTGFAIIIAKQLYGGLGQNPFNPAMIGYVVLLISFPVQMTSWLPPYEIAATTPDMLDTLRMIFSGHTASGGDMTLLRIGIDGISQATPLDTFKTSLRAGHSVEQIMQYPIYSGALAGVGWQWVNLAWLVGGVFLLWQKAIRWHIPVSFLLTLALCAALGWLFSPATLASPQLHLLSGATMLGAFFILTDPVTASTTNRGRLIFGALAGVLVWLIRSFGGYPDGVAFAVLLANITVPLIDYYTRPRVYGHRKG</sequence>
<keyword id="KW-0997">Cell inner membrane</keyword>
<keyword id="KW-1003">Cell membrane</keyword>
<keyword id="KW-0249">Electron transport</keyword>
<keyword id="KW-0285">Flavoprotein</keyword>
<keyword id="KW-0288">FMN</keyword>
<keyword id="KW-0472">Membrane</keyword>
<keyword id="KW-0597">Phosphoprotein</keyword>
<keyword id="KW-1278">Translocase</keyword>
<keyword id="KW-0812">Transmembrane</keyword>
<keyword id="KW-1133">Transmembrane helix</keyword>
<keyword id="KW-0813">Transport</keyword>
<gene>
    <name evidence="1" type="primary">rsxD</name>
    <name type="ordered locus">SPAB_01864</name>
</gene>
<name>RSXD_SALPB</name>
<reference key="1">
    <citation type="submission" date="2007-11" db="EMBL/GenBank/DDBJ databases">
        <authorList>
            <consortium name="The Salmonella enterica serovar Paratyphi B Genome Sequencing Project"/>
            <person name="McClelland M."/>
            <person name="Sanderson E.K."/>
            <person name="Porwollik S."/>
            <person name="Spieth J."/>
            <person name="Clifton W.S."/>
            <person name="Fulton R."/>
            <person name="Cordes M."/>
            <person name="Wollam A."/>
            <person name="Shah N."/>
            <person name="Pepin K."/>
            <person name="Bhonagiri V."/>
            <person name="Nash W."/>
            <person name="Johnson M."/>
            <person name="Thiruvilangam P."/>
            <person name="Wilson R."/>
        </authorList>
    </citation>
    <scope>NUCLEOTIDE SEQUENCE [LARGE SCALE GENOMIC DNA]</scope>
    <source>
        <strain>ATCC BAA-1250 / SPB7</strain>
    </source>
</reference>
<comment type="function">
    <text evidence="1">Part of a membrane-bound complex that couples electron transfer with translocation of ions across the membrane. Required to maintain the reduced state of SoxR.</text>
</comment>
<comment type="cofactor">
    <cofactor evidence="1">
        <name>FMN</name>
        <dbReference type="ChEBI" id="CHEBI:58210"/>
    </cofactor>
</comment>
<comment type="subunit">
    <text evidence="1">The complex is composed of six subunits: RsxA, RsxB, RsxC, RsxD, RsxE and RsxG.</text>
</comment>
<comment type="subcellular location">
    <subcellularLocation>
        <location evidence="1">Cell inner membrane</location>
        <topology evidence="1">Multi-pass membrane protein</topology>
    </subcellularLocation>
</comment>
<comment type="similarity">
    <text evidence="1">Belongs to the NqrB/RnfD family.</text>
</comment>
<feature type="chain" id="PRO_1000081153" description="Ion-translocating oxidoreductase complex subunit D">
    <location>
        <begin position="1"/>
        <end position="352"/>
    </location>
</feature>
<feature type="transmembrane region" description="Helical" evidence="1">
    <location>
        <begin position="20"/>
        <end position="40"/>
    </location>
</feature>
<feature type="transmembrane region" description="Helical" evidence="1">
    <location>
        <begin position="42"/>
        <end position="62"/>
    </location>
</feature>
<feature type="transmembrane region" description="Helical" evidence="1">
    <location>
        <begin position="69"/>
        <end position="91"/>
    </location>
</feature>
<feature type="transmembrane region" description="Helical" evidence="1">
    <location>
        <begin position="123"/>
        <end position="143"/>
    </location>
</feature>
<feature type="transmembrane region" description="Helical" evidence="1">
    <location>
        <begin position="215"/>
        <end position="235"/>
    </location>
</feature>
<feature type="transmembrane region" description="Helical" evidence="1">
    <location>
        <begin position="242"/>
        <end position="262"/>
    </location>
</feature>
<feature type="transmembrane region" description="Helical" evidence="1">
    <location>
        <begin position="267"/>
        <end position="287"/>
    </location>
</feature>
<feature type="transmembrane region" description="Helical" evidence="1">
    <location>
        <begin position="301"/>
        <end position="321"/>
    </location>
</feature>
<feature type="transmembrane region" description="Helical" evidence="1">
    <location>
        <begin position="322"/>
        <end position="342"/>
    </location>
</feature>
<feature type="modified residue" description="FMN phosphoryl threonine" evidence="1">
    <location>
        <position position="187"/>
    </location>
</feature>
<protein>
    <recommendedName>
        <fullName evidence="1">Ion-translocating oxidoreductase complex subunit D</fullName>
        <ecNumber evidence="1">7.-.-.-</ecNumber>
    </recommendedName>
    <alternativeName>
        <fullName evidence="1">Rsx electron transport complex subunit D</fullName>
    </alternativeName>
</protein>
<evidence type="ECO:0000255" key="1">
    <source>
        <dbReference type="HAMAP-Rule" id="MF_00462"/>
    </source>
</evidence>
<organism>
    <name type="scientific">Salmonella paratyphi B (strain ATCC BAA-1250 / SPB7)</name>
    <dbReference type="NCBI Taxonomy" id="1016998"/>
    <lineage>
        <taxon>Bacteria</taxon>
        <taxon>Pseudomonadati</taxon>
        <taxon>Pseudomonadota</taxon>
        <taxon>Gammaproteobacteria</taxon>
        <taxon>Enterobacterales</taxon>
        <taxon>Enterobacteriaceae</taxon>
        <taxon>Salmonella</taxon>
    </lineage>
</organism>
<proteinExistence type="inferred from homology"/>
<dbReference type="EC" id="7.-.-.-" evidence="1"/>
<dbReference type="EMBL" id="CP000886">
    <property type="protein sequence ID" value="ABX67257.1"/>
    <property type="molecule type" value="Genomic_DNA"/>
</dbReference>
<dbReference type="RefSeq" id="WP_000231888.1">
    <property type="nucleotide sequence ID" value="NC_010102.1"/>
</dbReference>
<dbReference type="SMR" id="A9N026"/>
<dbReference type="KEGG" id="spq:SPAB_01864"/>
<dbReference type="PATRIC" id="fig|1016998.12.peg.1756"/>
<dbReference type="HOGENOM" id="CLU_042020_0_0_6"/>
<dbReference type="BioCyc" id="SENT1016998:SPAB_RS07565-MONOMER"/>
<dbReference type="Proteomes" id="UP000008556">
    <property type="component" value="Chromosome"/>
</dbReference>
<dbReference type="GO" id="GO:0005886">
    <property type="term" value="C:plasma membrane"/>
    <property type="evidence" value="ECO:0007669"/>
    <property type="project" value="UniProtKB-SubCell"/>
</dbReference>
<dbReference type="GO" id="GO:0022900">
    <property type="term" value="P:electron transport chain"/>
    <property type="evidence" value="ECO:0007669"/>
    <property type="project" value="UniProtKB-UniRule"/>
</dbReference>
<dbReference type="GO" id="GO:0055085">
    <property type="term" value="P:transmembrane transport"/>
    <property type="evidence" value="ECO:0007669"/>
    <property type="project" value="InterPro"/>
</dbReference>
<dbReference type="HAMAP" id="MF_00462">
    <property type="entry name" value="RsxD_RnfD"/>
    <property type="match status" value="1"/>
</dbReference>
<dbReference type="InterPro" id="IPR004338">
    <property type="entry name" value="NqrB/RnfD"/>
</dbReference>
<dbReference type="InterPro" id="IPR011303">
    <property type="entry name" value="RnfD_bac"/>
</dbReference>
<dbReference type="NCBIfam" id="NF002011">
    <property type="entry name" value="PRK00816.1"/>
    <property type="match status" value="1"/>
</dbReference>
<dbReference type="NCBIfam" id="TIGR01946">
    <property type="entry name" value="rnfD"/>
    <property type="match status" value="1"/>
</dbReference>
<dbReference type="PANTHER" id="PTHR30578">
    <property type="entry name" value="ELECTRON TRANSPORT COMPLEX PROTEIN RNFD"/>
    <property type="match status" value="1"/>
</dbReference>
<dbReference type="PANTHER" id="PTHR30578:SF0">
    <property type="entry name" value="ION-TRANSLOCATING OXIDOREDUCTASE COMPLEX SUBUNIT D"/>
    <property type="match status" value="1"/>
</dbReference>
<dbReference type="Pfam" id="PF03116">
    <property type="entry name" value="NQR2_RnfD_RnfE"/>
    <property type="match status" value="1"/>
</dbReference>
<accession>A9N026</accession>